<name>RS3A_TRIAD</name>
<organism>
    <name type="scientific">Trichoplax adhaerens</name>
    <name type="common">Trichoplax reptans</name>
    <dbReference type="NCBI Taxonomy" id="10228"/>
    <lineage>
        <taxon>Eukaryota</taxon>
        <taxon>Metazoa</taxon>
        <taxon>Placozoa</taxon>
        <taxon>Uniplacotomia</taxon>
        <taxon>Trichoplacea</taxon>
        <taxon>Trichoplacidae</taxon>
        <taxon>Trichoplax</taxon>
    </lineage>
</organism>
<accession>B3S6Y0</accession>
<feature type="initiator methionine" description="Removed" evidence="1">
    <location>
        <position position="1"/>
    </location>
</feature>
<feature type="chain" id="PRO_0000389420" description="Small ribosomal subunit protein eS1">
    <location>
        <begin position="2"/>
        <end position="258"/>
    </location>
</feature>
<feature type="region of interest" description="Disordered" evidence="2">
    <location>
        <begin position="235"/>
        <end position="258"/>
    </location>
</feature>
<dbReference type="EMBL" id="DS985253">
    <property type="protein sequence ID" value="EDV21471.1"/>
    <property type="molecule type" value="Genomic_DNA"/>
</dbReference>
<dbReference type="RefSeq" id="XP_002116071.1">
    <property type="nucleotide sequence ID" value="XM_002116035.1"/>
</dbReference>
<dbReference type="SMR" id="B3S6Y0"/>
<dbReference type="FunCoup" id="B3S6Y0">
    <property type="interactions" value="1363"/>
</dbReference>
<dbReference type="STRING" id="10228.B3S6Y0"/>
<dbReference type="EnsemblMetazoa" id="TriadT36460">
    <property type="protein sequence ID" value="TriadP36460"/>
    <property type="gene ID" value="TriadG36460"/>
</dbReference>
<dbReference type="GeneID" id="6757203"/>
<dbReference type="KEGG" id="tad:TRIADDRAFT_36460"/>
<dbReference type="CTD" id="6757203"/>
<dbReference type="eggNOG" id="KOG1628">
    <property type="taxonomic scope" value="Eukaryota"/>
</dbReference>
<dbReference type="HOGENOM" id="CLU_062507_0_0_1"/>
<dbReference type="InParanoid" id="B3S6Y0"/>
<dbReference type="OMA" id="TRFKGHE"/>
<dbReference type="OrthoDB" id="9834376at2759"/>
<dbReference type="PhylomeDB" id="B3S6Y0"/>
<dbReference type="Proteomes" id="UP000009022">
    <property type="component" value="Unassembled WGS sequence"/>
</dbReference>
<dbReference type="GO" id="GO:0005829">
    <property type="term" value="C:cytosol"/>
    <property type="evidence" value="ECO:0000318"/>
    <property type="project" value="GO_Central"/>
</dbReference>
<dbReference type="GO" id="GO:0022627">
    <property type="term" value="C:cytosolic small ribosomal subunit"/>
    <property type="evidence" value="ECO:0007669"/>
    <property type="project" value="UniProtKB-UniRule"/>
</dbReference>
<dbReference type="GO" id="GO:0003735">
    <property type="term" value="F:structural constituent of ribosome"/>
    <property type="evidence" value="ECO:0007669"/>
    <property type="project" value="UniProtKB-UniRule"/>
</dbReference>
<dbReference type="GO" id="GO:0006412">
    <property type="term" value="P:translation"/>
    <property type="evidence" value="ECO:0007669"/>
    <property type="project" value="UniProtKB-UniRule"/>
</dbReference>
<dbReference type="HAMAP" id="MF_03122">
    <property type="entry name" value="Ribosomal_eS1_euk"/>
    <property type="match status" value="1"/>
</dbReference>
<dbReference type="InterPro" id="IPR001593">
    <property type="entry name" value="Ribosomal_eS1"/>
</dbReference>
<dbReference type="InterPro" id="IPR018281">
    <property type="entry name" value="Ribosomal_eS1_CS"/>
</dbReference>
<dbReference type="InterPro" id="IPR027500">
    <property type="entry name" value="Ribosomal_eS1_euk"/>
</dbReference>
<dbReference type="PANTHER" id="PTHR11830">
    <property type="entry name" value="40S RIBOSOMAL PROTEIN S3A"/>
    <property type="match status" value="1"/>
</dbReference>
<dbReference type="Pfam" id="PF01015">
    <property type="entry name" value="Ribosomal_S3Ae"/>
    <property type="match status" value="1"/>
</dbReference>
<dbReference type="SMART" id="SM01397">
    <property type="entry name" value="Ribosomal_S3Ae"/>
    <property type="match status" value="1"/>
</dbReference>
<dbReference type="PROSITE" id="PS01191">
    <property type="entry name" value="RIBOSOMAL_S3AE"/>
    <property type="match status" value="1"/>
</dbReference>
<evidence type="ECO:0000255" key="1">
    <source>
        <dbReference type="HAMAP-Rule" id="MF_03122"/>
    </source>
</evidence>
<evidence type="ECO:0000256" key="2">
    <source>
        <dbReference type="SAM" id="MobiDB-lite"/>
    </source>
</evidence>
<evidence type="ECO:0000305" key="3"/>
<comment type="subunit">
    <text evidence="1">Component of the small ribosomal subunit. Mature ribosomes consist of a small (40S) and a large (60S) subunit. The 40S subunit contains about 33 different proteins and 1 molecule of RNA (18S). The 60S subunit contains about 49 different proteins and 3 molecules of RNA (28S, 5.8S and 5S).</text>
</comment>
<comment type="subcellular location">
    <subcellularLocation>
        <location evidence="1">Cytoplasm</location>
    </subcellularLocation>
</comment>
<comment type="similarity">
    <text evidence="1">Belongs to the eukaryotic ribosomal protein eS1 family.</text>
</comment>
<reference key="1">
    <citation type="journal article" date="2008" name="Nature">
        <title>The Trichoplax genome and the nature of placozoans.</title>
        <authorList>
            <person name="Srivastava M."/>
            <person name="Begovic E."/>
            <person name="Chapman J."/>
            <person name="Putnam N.H."/>
            <person name="Hellsten U."/>
            <person name="Kawashima T."/>
            <person name="Kuo A."/>
            <person name="Mitros T."/>
            <person name="Salamov A."/>
            <person name="Carpenter M.L."/>
            <person name="Signorovitch A.Y."/>
            <person name="Moreno M.A."/>
            <person name="Kamm K."/>
            <person name="Grimwood J."/>
            <person name="Schmutz J."/>
            <person name="Shapiro H."/>
            <person name="Grigoriev I.V."/>
            <person name="Buss L.W."/>
            <person name="Schierwater B."/>
            <person name="Dellaporta S.L."/>
            <person name="Rokhsar D.S."/>
        </authorList>
    </citation>
    <scope>NUCLEOTIDE SEQUENCE [LARGE SCALE GENOMIC DNA]</scope>
    <source>
        <strain>Grell-BS-1999</strain>
    </source>
</reference>
<proteinExistence type="inferred from homology"/>
<gene>
    <name type="ORF">TRIADDRAFT_36460</name>
</gene>
<sequence length="258" mass="28881">MAVGKNKRLTKGKKGQKKKIIDPFTKKDWYDVKAPSQFAVRNIGKTLVNRTSGTKIASDGLKGRVFEVSLADLQNGEIAFRKFRLIAEEVLGKSVLTNFHGMSMTSDKLKSLVKKWQTLIEAHIDAKTTDGYLLRFFAIGFTKKRPNQIKKTAYAKTSQCRSIRKKMTDIITREVSAIDLKEVVNRLIPDSIGKDIEKSCQSIYPLHDVYIRKVKVLKKPKLDTAKLLELHGEGVASSGDAGSAVRRDGYEPPVQESV</sequence>
<keyword id="KW-0963">Cytoplasm</keyword>
<keyword id="KW-1185">Reference proteome</keyword>
<keyword id="KW-0687">Ribonucleoprotein</keyword>
<keyword id="KW-0689">Ribosomal protein</keyword>
<protein>
    <recommendedName>
        <fullName evidence="1">Small ribosomal subunit protein eS1</fullName>
    </recommendedName>
    <alternativeName>
        <fullName evidence="3">40S ribosomal protein S3a</fullName>
    </alternativeName>
</protein>